<organismHost>
    <name type="scientific">Escherichia coli</name>
    <dbReference type="NCBI Taxonomy" id="562"/>
</organismHost>
<evidence type="ECO:0000269" key="1">
    <source>
    </source>
</evidence>
<evidence type="ECO:0000269" key="2">
    <source>
    </source>
</evidence>
<evidence type="ECO:0000269" key="3">
    <source>
    </source>
</evidence>
<evidence type="ECO:0000269" key="4">
    <source>
    </source>
</evidence>
<evidence type="ECO:0000269" key="5">
    <source>
    </source>
</evidence>
<evidence type="ECO:0000269" key="6">
    <source>
    </source>
</evidence>
<evidence type="ECO:0000269" key="7">
    <source>
    </source>
</evidence>
<evidence type="ECO:0000303" key="8">
    <source>
    </source>
</evidence>
<evidence type="ECO:0000312" key="9">
    <source>
        <dbReference type="EMBL" id="AAM33127.1"/>
    </source>
</evidence>
<evidence type="ECO:0000312" key="10">
    <source>
        <dbReference type="EMBL" id="ACY07223.1"/>
    </source>
</evidence>
<evidence type="ECO:0000312" key="11">
    <source>
        <dbReference type="EMBL" id="ACY07227.1"/>
    </source>
</evidence>
<evidence type="ECO:0000312" key="12">
    <source>
        <dbReference type="EMBL" id="ACY07231.1"/>
    </source>
</evidence>
<evidence type="ECO:0000312" key="13">
    <source>
        <dbReference type="EMBL" id="ACY07235.1"/>
    </source>
</evidence>
<evidence type="ECO:0000312" key="14">
    <source>
        <dbReference type="EMBL" id="AEQ25541.1"/>
    </source>
</evidence>
<evidence type="ECO:0000312" key="15">
    <source>
        <dbReference type="EMBL" id="AEQ25545.1"/>
    </source>
</evidence>
<evidence type="ECO:0000312" key="16">
    <source>
        <dbReference type="EMBL" id="AEQ25549.1"/>
    </source>
</evidence>
<evidence type="ECO:0000312" key="17">
    <source>
        <dbReference type="EMBL" id="BAP18763.1"/>
    </source>
</evidence>
<evidence type="ECO:0007744" key="18">
    <source>
        <dbReference type="PDB" id="3RLC"/>
    </source>
</evidence>
<evidence type="ECO:0007744" key="19">
    <source>
        <dbReference type="PDB" id="3RLK"/>
    </source>
</evidence>
<evidence type="ECO:0007829" key="20">
    <source>
        <dbReference type="PDB" id="3RLK"/>
    </source>
</evidence>
<evidence type="ECO:0007829" key="21">
    <source>
        <dbReference type="PDB" id="7TJE"/>
    </source>
</evidence>
<reference key="1">
    <citation type="journal article" date="1993" name="Gene">
        <title>Recombinant RNA phage Q-beta capsid particles synthesized and self-assembled in Escherichia coli.</title>
        <authorList>
            <person name="Kozlovska T.M."/>
            <person name="Cielens I."/>
            <person name="Dreilinna D."/>
            <person name="Dislers A."/>
            <person name="Baumanis V."/>
            <person name="Ose V."/>
            <person name="Pumpens P."/>
        </authorList>
    </citation>
    <scope>NUCLEOTIDE SEQUENCE [GENOMIC RNA]</scope>
</reference>
<reference key="2">
    <citation type="journal article" date="2003" name="BMC Evol. Biol.">
        <title>Evolution of phage with chemically ambiguous proteomes.</title>
        <authorList>
            <person name="Bacher J.M."/>
            <person name="Bull J.J."/>
            <person name="Ellington A.D."/>
        </authorList>
    </citation>
    <scope>NUCLEOTIDE SEQUENCE [GENOMIC RNA]</scope>
</reference>
<reference key="3">
    <citation type="journal article" date="2009" name="PLoS Genet.">
        <title>The fitness effects of random mutations in single-stranded DNA and RNA bacteriophages.</title>
        <authorList>
            <person name="Domingo-Calap P."/>
            <person name="Cuevas J.M."/>
            <person name="Sanjuan R."/>
        </authorList>
    </citation>
    <scope>NUCLEOTIDE SEQUENCE [GENOMIC RNA]</scope>
    <source>
        <strain evidence="10">QB_1</strain>
        <strain evidence="11">QB_2</strain>
        <strain evidence="12">QB_3</strain>
        <strain evidence="13">QB_ancestral</strain>
    </source>
</reference>
<reference key="4">
    <citation type="journal article" date="2011" name="Evolution">
        <title>Experimental evolution of RNA versus DNA viruses.</title>
        <authorList>
            <person name="Domingo-Calap P."/>
            <person name="Sanjuan R."/>
        </authorList>
    </citation>
    <scope>NUCLEOTIDE SEQUENCE [GENOMIC RNA]</scope>
    <source>
        <strain evidence="14">Qbeta_1_FR</strain>
        <strain evidence="15">Qbeta_2_FR</strain>
        <strain evidence="16">Qbeta_3_FR</strain>
    </source>
</reference>
<reference key="5">
    <citation type="journal article" date="2014" name="J. Virol.">
        <title>Contribution of silent mutations to thermal adaptation of RNA bacteriophage Qbeta.</title>
        <authorList>
            <person name="Kashiwagi A."/>
            <person name="Sugawara R."/>
            <person name="Sano-Tsushima F."/>
            <person name="Kumagai T."/>
            <person name="Yomo T."/>
        </authorList>
    </citation>
    <scope>NUCLEOTIDE SEQUENCE [GENOMIC RNA]</scope>
    <source>
        <strain evidence="17">Anc</strain>
        <strain>TW18</strain>
    </source>
</reference>
<reference key="6">
    <citation type="journal article" date="1971" name="Nature New Biol.">
        <title>Natural read-through at the UGA termination signal of Q-beta coat protein cistron.</title>
        <authorList>
            <person name="Weiner A.M."/>
            <person name="Weber K."/>
        </authorList>
    </citation>
    <scope>READTHROUGH</scope>
</reference>
<reference evidence="18 19" key="7">
    <citation type="journal article" date="2011" name="Protein Sci.">
        <title>Crystal structure of the read-through domain from bacteriophage Qbeta A1 protein.</title>
        <authorList>
            <person name="Rumnieks J."/>
            <person name="Tars K."/>
        </authorList>
    </citation>
    <scope>X-RAY CRYSTALLOGRAPHY (1.76 ANGSTROMS) OF 145-329</scope>
    <scope>FUNCTION</scope>
    <scope>SUBCELLULAR LOCATION</scope>
</reference>
<protein>
    <recommendedName>
        <fullName>Minor capsid protein A1</fullName>
    </recommendedName>
    <alternativeName>
        <fullName evidence="9">A1 read-through protein</fullName>
    </alternativeName>
</protein>
<dbReference type="EMBL" id="M99039">
    <property type="protein sequence ID" value="AAA16663.1"/>
    <property type="molecule type" value="Unassigned_DNA"/>
</dbReference>
<dbReference type="EMBL" id="AY099114">
    <property type="protein sequence ID" value="AAM33127.1"/>
    <property type="molecule type" value="Genomic_RNA"/>
</dbReference>
<dbReference type="EMBL" id="GQ153928">
    <property type="protein sequence ID" value="ACY07223.1"/>
    <property type="molecule type" value="Genomic_RNA"/>
</dbReference>
<dbReference type="EMBL" id="GQ153929">
    <property type="protein sequence ID" value="ACY07227.1"/>
    <property type="molecule type" value="Genomic_RNA"/>
</dbReference>
<dbReference type="EMBL" id="GQ153930">
    <property type="protein sequence ID" value="ACY07231.1"/>
    <property type="molecule type" value="Genomic_RNA"/>
</dbReference>
<dbReference type="EMBL" id="GQ153931">
    <property type="protein sequence ID" value="ACY07235.1"/>
    <property type="molecule type" value="Genomic_RNA"/>
</dbReference>
<dbReference type="EMBL" id="JF719735">
    <property type="protein sequence ID" value="AEQ25541.1"/>
    <property type="molecule type" value="Genomic_RNA"/>
</dbReference>
<dbReference type="EMBL" id="JF719736">
    <property type="protein sequence ID" value="AEQ25545.1"/>
    <property type="molecule type" value="Genomic_RNA"/>
</dbReference>
<dbReference type="EMBL" id="JF719737">
    <property type="protein sequence ID" value="AEQ25549.1"/>
    <property type="molecule type" value="Genomic_RNA"/>
</dbReference>
<dbReference type="EMBL" id="AB971354">
    <property type="protein sequence ID" value="BAP18763.1"/>
    <property type="molecule type" value="Genomic_RNA"/>
</dbReference>
<dbReference type="PDB" id="3RLC">
    <property type="method" value="X-ray"/>
    <property type="resolution" value="2.90 A"/>
    <property type="chains" value="A=145-329"/>
</dbReference>
<dbReference type="PDB" id="3RLK">
    <property type="method" value="X-ray"/>
    <property type="resolution" value="1.76 A"/>
    <property type="chains" value="A=145-329"/>
</dbReference>
<dbReference type="PDB" id="7TJD">
    <property type="method" value="X-ray"/>
    <property type="resolution" value="3.50 A"/>
    <property type="chains" value="A/B/C/D/E/F/G/H/I/J/K/L/M/N/O/P/Q/R/S/T=2-133"/>
</dbReference>
<dbReference type="PDB" id="7TJE">
    <property type="method" value="X-ray"/>
    <property type="resolution" value="2.80 A"/>
    <property type="chains" value="A/B/C/D/E=2-133"/>
</dbReference>
<dbReference type="PDB" id="7TJG">
    <property type="method" value="X-ray"/>
    <property type="resolution" value="3.90 A"/>
    <property type="chains" value="A/B/C/D/E=2-133"/>
</dbReference>
<dbReference type="PDB" id="7TJM">
    <property type="method" value="X-ray"/>
    <property type="resolution" value="3.54 A"/>
    <property type="chains" value="0/1/2/3/4/5/6/7/8/9/A/B/C/D/E/F/G/H/I/J/K/L/M/N/O/P/Q/R/S/T=2-133"/>
</dbReference>
<dbReference type="PDB" id="8FEH">
    <property type="method" value="EM"/>
    <property type="resolution" value="3.28 A"/>
    <property type="chains" value="D=2-133"/>
</dbReference>
<dbReference type="PDB" id="8W5D">
    <property type="method" value="EM"/>
    <property type="resolution" value="4.30 A"/>
    <property type="chains" value="C/c=2-132"/>
</dbReference>
<dbReference type="PDB" id="8W5E">
    <property type="method" value="EM"/>
    <property type="resolution" value="3.80 A"/>
    <property type="chains" value="C/c=1-133"/>
</dbReference>
<dbReference type="PDB" id="8W5F">
    <property type="method" value="EM"/>
    <property type="resolution" value="3.30 A"/>
    <property type="chains" value="C/c=1-133"/>
</dbReference>
<dbReference type="PDB" id="8W5G">
    <property type="method" value="EM"/>
    <property type="resolution" value="4.00 A"/>
    <property type="chains" value="A/B/C=2-133"/>
</dbReference>
<dbReference type="PDB" id="8W5H">
    <property type="method" value="EM"/>
    <property type="resolution" value="2.80 A"/>
    <property type="chains" value="A/B/C=1-133"/>
</dbReference>
<dbReference type="PDB" id="8W5I">
    <property type="method" value="EM"/>
    <property type="resolution" value="3.60 A"/>
    <property type="chains" value="A/B/C/D/E=1-133"/>
</dbReference>
<dbReference type="PDB" id="8W5L">
    <property type="method" value="EM"/>
    <property type="resolution" value="2.80 A"/>
    <property type="chains" value="A/B/C=1-133"/>
</dbReference>
<dbReference type="PDB" id="8W5M">
    <property type="method" value="EM"/>
    <property type="resolution" value="3.10 A"/>
    <property type="chains" value="A/B/C/b=1-133"/>
</dbReference>
<dbReference type="PDB" id="8W5N">
    <property type="method" value="EM"/>
    <property type="resolution" value="3.10 A"/>
    <property type="chains" value="A/B/C=1-133"/>
</dbReference>
<dbReference type="PDB" id="8W5O">
    <property type="method" value="EM"/>
    <property type="resolution" value="3.60 A"/>
    <property type="chains" value="A/B/b=1-133"/>
</dbReference>
<dbReference type="PDB" id="8W5P">
    <property type="method" value="EM"/>
    <property type="resolution" value="3.30 A"/>
    <property type="chains" value="C/c=1-133"/>
</dbReference>
<dbReference type="PDB" id="8W5Q">
    <property type="method" value="EM"/>
    <property type="resolution" value="4.10 A"/>
    <property type="chains" value="C/c=1-133"/>
</dbReference>
<dbReference type="PDB" id="8W5R">
    <property type="method" value="EM"/>
    <property type="resolution" value="3.10 A"/>
    <property type="chains" value="A/B/C=1-133"/>
</dbReference>
<dbReference type="PDB" id="8W5T">
    <property type="method" value="EM"/>
    <property type="resolution" value="3.60 A"/>
    <property type="chains" value="A/B=1-133"/>
</dbReference>
<dbReference type="PDB" id="8W5U">
    <property type="method" value="EM"/>
    <property type="resolution" value="3.90 A"/>
    <property type="chains" value="C/c=1-133"/>
</dbReference>
<dbReference type="PDB" id="8W5V">
    <property type="method" value="EM"/>
    <property type="resolution" value="3.40 A"/>
    <property type="chains" value="C/c=1-133"/>
</dbReference>
<dbReference type="PDB" id="8W5W">
    <property type="method" value="EM"/>
    <property type="resolution" value="3.30 A"/>
    <property type="chains" value="A/B/C=2-133"/>
</dbReference>
<dbReference type="PDBsum" id="3RLC"/>
<dbReference type="PDBsum" id="3RLK"/>
<dbReference type="PDBsum" id="7TJD"/>
<dbReference type="PDBsum" id="7TJE"/>
<dbReference type="PDBsum" id="7TJG"/>
<dbReference type="PDBsum" id="7TJM"/>
<dbReference type="PDBsum" id="8FEH"/>
<dbReference type="PDBsum" id="8W5D"/>
<dbReference type="PDBsum" id="8W5E"/>
<dbReference type="PDBsum" id="8W5F"/>
<dbReference type="PDBsum" id="8W5G"/>
<dbReference type="PDBsum" id="8W5H"/>
<dbReference type="PDBsum" id="8W5I"/>
<dbReference type="PDBsum" id="8W5L"/>
<dbReference type="PDBsum" id="8W5M"/>
<dbReference type="PDBsum" id="8W5N"/>
<dbReference type="PDBsum" id="8W5O"/>
<dbReference type="PDBsum" id="8W5P"/>
<dbReference type="PDBsum" id="8W5Q"/>
<dbReference type="PDBsum" id="8W5R"/>
<dbReference type="PDBsum" id="8W5T"/>
<dbReference type="PDBsum" id="8W5U"/>
<dbReference type="PDBsum" id="8W5V"/>
<dbReference type="PDBsum" id="8W5W"/>
<dbReference type="EMDB" id="EMD-29027"/>
<dbReference type="EMDB" id="EMD-37286"/>
<dbReference type="EMDB" id="EMD-37287"/>
<dbReference type="EMDB" id="EMD-37290"/>
<dbReference type="EMDB" id="EMD-37291"/>
<dbReference type="EMDB" id="EMD-37292"/>
<dbReference type="EMDB" id="EMD-37293"/>
<dbReference type="EMDB" id="EMD-37296"/>
<dbReference type="EMDB" id="EMD-37297"/>
<dbReference type="EMDB" id="EMD-37298"/>
<dbReference type="EMDB" id="EMD-37299"/>
<dbReference type="EMDB" id="EMD-37300"/>
<dbReference type="EMDB" id="EMD-37301"/>
<dbReference type="EMDB" id="EMD-37302"/>
<dbReference type="EMDB" id="EMD-37303"/>
<dbReference type="EMDB" id="EMD-37304"/>
<dbReference type="EMDB" id="EMD-37305"/>
<dbReference type="EMDB" id="EMD-37306"/>
<dbReference type="SMR" id="Q8LTE1"/>
<dbReference type="EvolutionaryTrace" id="Q8LTE1"/>
<dbReference type="Proteomes" id="UP000185268">
    <property type="component" value="Segment"/>
</dbReference>
<dbReference type="Proteomes" id="UP000305125">
    <property type="component" value="Segment"/>
</dbReference>
<dbReference type="Proteomes" id="UP000306921">
    <property type="component" value="Segment"/>
</dbReference>
<dbReference type="Proteomes" id="UP000309733">
    <property type="component" value="Segment"/>
</dbReference>
<dbReference type="GO" id="GO:0019028">
    <property type="term" value="C:viral capsid"/>
    <property type="evidence" value="ECO:0007669"/>
    <property type="project" value="UniProtKB-KW"/>
</dbReference>
<dbReference type="GO" id="GO:0005198">
    <property type="term" value="F:structural molecule activity"/>
    <property type="evidence" value="ECO:0007669"/>
    <property type="project" value="InterPro"/>
</dbReference>
<dbReference type="FunFam" id="3.30.380.10:FF:000002">
    <property type="entry name" value="Capsid protein"/>
    <property type="match status" value="1"/>
</dbReference>
<dbReference type="Gene3D" id="3.30.380.10">
    <property type="entry name" value="MS2 Viral Coat Protein"/>
    <property type="match status" value="1"/>
</dbReference>
<dbReference type="InterPro" id="IPR002703">
    <property type="entry name" value="Levivir_coat"/>
</dbReference>
<dbReference type="InterPro" id="IPR015954">
    <property type="entry name" value="Phage_RNA-type_capsid"/>
</dbReference>
<dbReference type="InterPro" id="IPR031819">
    <property type="entry name" value="Read-through_dom"/>
</dbReference>
<dbReference type="Pfam" id="PF01819">
    <property type="entry name" value="Levi_coat"/>
    <property type="match status" value="1"/>
</dbReference>
<dbReference type="Pfam" id="PF16814">
    <property type="entry name" value="Read-through"/>
    <property type="match status" value="1"/>
</dbReference>
<dbReference type="SUPFAM" id="SSF55405">
    <property type="entry name" value="RNA bacteriophage capsid protein"/>
    <property type="match status" value="1"/>
</dbReference>
<name>A1_BPQBE</name>
<organism evidence="9">
    <name type="scientific">Escherichia virus Qbeta</name>
    <name type="common">Bacteriophage Q-beta</name>
    <dbReference type="NCBI Taxonomy" id="39803"/>
    <lineage>
        <taxon>Viruses</taxon>
        <taxon>Riboviria</taxon>
        <taxon>Orthornavirae</taxon>
        <taxon>Lenarviricota</taxon>
        <taxon>Leviviricetes</taxon>
        <taxon>Norzivirales</taxon>
        <taxon>Fiersviridae</taxon>
        <taxon>Qubevirus</taxon>
    </lineage>
</organism>
<feature type="chain" id="PRO_0000438882" description="Minor capsid protein A1">
    <location>
        <begin position="1"/>
        <end position="329"/>
    </location>
</feature>
<feature type="sequence variant" description="In strain: Qbeta_3_FR." evidence="4">
    <original>A</original>
    <variation>S</variation>
    <location>
        <position position="34"/>
    </location>
</feature>
<feature type="sequence variant" description="In strain: QB_1 and Qbeta_1_FR." evidence="2 4">
    <original>T</original>
    <variation>A</variation>
    <location>
        <position position="76"/>
    </location>
</feature>
<feature type="sequence variant" description="In strain: QB_3, Qbeta_3_FR." evidence="2 4">
    <original>T</original>
    <variation>A</variation>
    <location>
        <position position="182"/>
    </location>
</feature>
<feature type="sequence variant" description="In strain: QB_3, Qbeta_3_FR." evidence="2 4">
    <original>N</original>
    <variation>S</variation>
    <location>
        <position position="191"/>
    </location>
</feature>
<feature type="sequence variant" description="In strain: Qbeta_2_FR." evidence="4">
    <original>L</original>
    <variation>R</variation>
    <location>
        <position position="207"/>
    </location>
</feature>
<feature type="sequence variant" description="In strain: Qbeta_3_FR." evidence="2 4">
    <original>T</original>
    <variation>A</variation>
    <location>
        <position position="211"/>
    </location>
</feature>
<feature type="sequence variant" description="In strain: QB_2, TW18 and Anc." evidence="1 2 5 7">
    <original>V</original>
    <variation>F</variation>
    <location>
        <position position="225"/>
    </location>
</feature>
<feature type="sequence variant" description="In strain: Qbeta_1_FR and Qbeta_3_FR." evidence="4">
    <original>V</original>
    <variation>M</variation>
    <location>
        <position position="292"/>
    </location>
</feature>
<feature type="strand" evidence="21">
    <location>
        <begin position="7"/>
        <end position="12"/>
    </location>
</feature>
<feature type="turn" evidence="21">
    <location>
        <begin position="13"/>
        <end position="16"/>
    </location>
</feature>
<feature type="strand" evidence="21">
    <location>
        <begin position="18"/>
        <end position="24"/>
    </location>
</feature>
<feature type="strand" evidence="21">
    <location>
        <begin position="29"/>
        <end position="31"/>
    </location>
</feature>
<feature type="strand" evidence="21">
    <location>
        <begin position="34"/>
        <end position="37"/>
    </location>
</feature>
<feature type="helix" evidence="21">
    <location>
        <begin position="43"/>
        <end position="45"/>
    </location>
</feature>
<feature type="strand" evidence="21">
    <location>
        <begin position="48"/>
        <end position="54"/>
    </location>
</feature>
<feature type="strand" evidence="21">
    <location>
        <begin position="62"/>
        <end position="75"/>
    </location>
</feature>
<feature type="strand" evidence="21">
    <location>
        <begin position="78"/>
        <end position="82"/>
    </location>
</feature>
<feature type="strand" evidence="21">
    <location>
        <begin position="84"/>
        <end position="97"/>
    </location>
</feature>
<feature type="helix" evidence="21">
    <location>
        <begin position="103"/>
        <end position="116"/>
    </location>
</feature>
<feature type="helix" evidence="21">
    <location>
        <begin position="120"/>
        <end position="127"/>
    </location>
</feature>
<feature type="strand" evidence="20">
    <location>
        <begin position="171"/>
        <end position="179"/>
    </location>
</feature>
<feature type="strand" evidence="20">
    <location>
        <begin position="183"/>
        <end position="185"/>
    </location>
</feature>
<feature type="strand" evidence="20">
    <location>
        <begin position="189"/>
        <end position="195"/>
    </location>
</feature>
<feature type="strand" evidence="20">
    <location>
        <begin position="199"/>
        <end position="202"/>
    </location>
</feature>
<feature type="helix" evidence="20">
    <location>
        <begin position="204"/>
        <end position="207"/>
    </location>
</feature>
<feature type="strand" evidence="20">
    <location>
        <begin position="208"/>
        <end position="211"/>
    </location>
</feature>
<feature type="turn" evidence="20">
    <location>
        <begin position="219"/>
        <end position="222"/>
    </location>
</feature>
<feature type="strand" evidence="20">
    <location>
        <begin position="233"/>
        <end position="235"/>
    </location>
</feature>
<feature type="helix" evidence="20">
    <location>
        <begin position="238"/>
        <end position="241"/>
    </location>
</feature>
<feature type="helix" evidence="20">
    <location>
        <begin position="244"/>
        <end position="249"/>
    </location>
</feature>
<feature type="strand" evidence="20">
    <location>
        <begin position="254"/>
        <end position="258"/>
    </location>
</feature>
<feature type="strand" evidence="20">
    <location>
        <begin position="260"/>
        <end position="263"/>
    </location>
</feature>
<feature type="strand" evidence="20">
    <location>
        <begin position="266"/>
        <end position="272"/>
    </location>
</feature>
<feature type="helix" evidence="20">
    <location>
        <begin position="273"/>
        <end position="275"/>
    </location>
</feature>
<feature type="strand" evidence="20">
    <location>
        <begin position="277"/>
        <end position="280"/>
    </location>
</feature>
<feature type="helix" evidence="20">
    <location>
        <begin position="281"/>
        <end position="284"/>
    </location>
</feature>
<feature type="turn" evidence="20">
    <location>
        <begin position="287"/>
        <end position="289"/>
    </location>
</feature>
<feature type="strand" evidence="20">
    <location>
        <begin position="291"/>
        <end position="296"/>
    </location>
</feature>
<feature type="helix" evidence="20">
    <location>
        <begin position="301"/>
        <end position="304"/>
    </location>
</feature>
<feature type="helix" evidence="20">
    <location>
        <begin position="310"/>
        <end position="312"/>
    </location>
</feature>
<feature type="turn" evidence="20">
    <location>
        <begin position="315"/>
        <end position="317"/>
    </location>
</feature>
<feature type="strand" evidence="20">
    <location>
        <begin position="320"/>
        <end position="325"/>
    </location>
</feature>
<proteinExistence type="evidence at protein level"/>
<keyword id="KW-0002">3D-structure</keyword>
<keyword id="KW-0167">Capsid protein</keyword>
<keyword id="KW-0946">Virion</keyword>
<comment type="function">
    <text evidence="3">Minor capsid protein.</text>
</comment>
<comment type="subcellular location">
    <subcellularLocation>
        <location evidence="8">Virion</location>
    </subcellularLocation>
    <text evidence="8">Present in 3-10 copies per virion. The readthrough extensions are probably located on the exterior of the capsid.</text>
</comment>
<comment type="miscellaneous">
    <text evidence="6">This protein is translated as a fusion protein by episodic readthrough of the termination codon at the end of the capsid protein. Readthrough of the terminator codon occurs between the codons for Tyr-133 and Trp-134, thereby producing the readthrough extension.</text>
</comment>
<accession>Q8LTE1</accession>
<accession>D0U1F2</accession>
<accession>D0U1F6</accession>
<accession>D0U1G0</accession>
<accession>D0U1G4</accession>
<accession>G4WZQ8</accession>
<accession>G4WZR2</accession>
<accession>G4WZR6</accession>
<sequence length="329" mass="36086">MAKLETVTLGNIGKDGKQTLVLNPRGVNPTNGVASLSQAGAVPALEKRVTVSVSQPSRNRKNYKVQVKIQNPTACTANGSCDPSVTRQAYADVTFSFTQYSTDEERAFVRTELAALLASPLLIDAIDQLNPAYWTLLIAGGGSGSKPDPVIPDPPIDPPPGTGKYTCPFAIWSLEEVYEPPTKNRPWPIYNAVELQPREFDVALKDLLGNTKWRDWDSRLSYTTVRGCRGNGYIDLDATYLATDQAMRDQKYDIREGKKPGAFGNIERFIYLKSINAYCSLSDIAAYHADGVIVGFWRDPSSGGAIPFDFTKFDKTKCPIQAVIVVPRA</sequence>